<organism>
    <name type="scientific">Clostridium botulinum (strain Kyoto / Type A2)</name>
    <dbReference type="NCBI Taxonomy" id="536232"/>
    <lineage>
        <taxon>Bacteria</taxon>
        <taxon>Bacillati</taxon>
        <taxon>Bacillota</taxon>
        <taxon>Clostridia</taxon>
        <taxon>Eubacteriales</taxon>
        <taxon>Clostridiaceae</taxon>
        <taxon>Clostridium</taxon>
    </lineage>
</organism>
<accession>C1FVW3</accession>
<reference key="1">
    <citation type="submission" date="2008-10" db="EMBL/GenBank/DDBJ databases">
        <title>Genome sequence of Clostridium botulinum A2 Kyoto.</title>
        <authorList>
            <person name="Shrivastava S."/>
            <person name="Brinkac L.M."/>
            <person name="Brown J.L."/>
            <person name="Bruce D."/>
            <person name="Detter C.C."/>
            <person name="Johnson E.A."/>
            <person name="Munk C.A."/>
            <person name="Smith L.A."/>
            <person name="Smith T.J."/>
            <person name="Sutton G."/>
            <person name="Brettin T.S."/>
        </authorList>
    </citation>
    <scope>NUCLEOTIDE SEQUENCE [LARGE SCALE GENOMIC DNA]</scope>
    <source>
        <strain>Kyoto / Type A2</strain>
    </source>
</reference>
<comment type="function">
    <text evidence="1">Catalyzes the reversible adenylation of nicotinate mononucleotide (NaMN) to nicotinic acid adenine dinucleotide (NaAD).</text>
</comment>
<comment type="catalytic activity">
    <reaction evidence="1">
        <text>nicotinate beta-D-ribonucleotide + ATP + H(+) = deamido-NAD(+) + diphosphate</text>
        <dbReference type="Rhea" id="RHEA:22860"/>
        <dbReference type="ChEBI" id="CHEBI:15378"/>
        <dbReference type="ChEBI" id="CHEBI:30616"/>
        <dbReference type="ChEBI" id="CHEBI:33019"/>
        <dbReference type="ChEBI" id="CHEBI:57502"/>
        <dbReference type="ChEBI" id="CHEBI:58437"/>
        <dbReference type="EC" id="2.7.7.18"/>
    </reaction>
</comment>
<comment type="pathway">
    <text evidence="1">Cofactor biosynthesis; NAD(+) biosynthesis; deamido-NAD(+) from nicotinate D-ribonucleotide: step 1/1.</text>
</comment>
<comment type="similarity">
    <text evidence="1">Belongs to the NadD family.</text>
</comment>
<sequence>MINKAILGGTFDPIHNAHINVAYEALERFNLEEVIFIPAGNPPHKIKLKKTPAHIRYEMVKLAIEKETRFSISDFEIKSKGLSYTYRTLKHFKEKEPETNWYFITGEDCLSYLEHWKYIDEIFNICNFVIFSREGFKEKEEIIKKKKSILLKYGKEILFMDASILDISSTKIRNRIKEGKEVSFYMPDKVYKFILQNNLYK</sequence>
<proteinExistence type="inferred from homology"/>
<evidence type="ECO:0000255" key="1">
    <source>
        <dbReference type="HAMAP-Rule" id="MF_00244"/>
    </source>
</evidence>
<gene>
    <name evidence="1" type="primary">nadD</name>
    <name type="ordered locus">CLM_3379</name>
</gene>
<dbReference type="EC" id="2.7.7.18" evidence="1"/>
<dbReference type="EMBL" id="CP001581">
    <property type="protein sequence ID" value="ACO86827.1"/>
    <property type="molecule type" value="Genomic_DNA"/>
</dbReference>
<dbReference type="RefSeq" id="WP_003357933.1">
    <property type="nucleotide sequence ID" value="NC_012563.1"/>
</dbReference>
<dbReference type="SMR" id="C1FVW3"/>
<dbReference type="KEGG" id="cby:CLM_3379"/>
<dbReference type="eggNOG" id="COG1057">
    <property type="taxonomic scope" value="Bacteria"/>
</dbReference>
<dbReference type="HOGENOM" id="CLU_069765_3_2_9"/>
<dbReference type="UniPathway" id="UPA00253">
    <property type="reaction ID" value="UER00332"/>
</dbReference>
<dbReference type="Proteomes" id="UP000001374">
    <property type="component" value="Chromosome"/>
</dbReference>
<dbReference type="GO" id="GO:0005524">
    <property type="term" value="F:ATP binding"/>
    <property type="evidence" value="ECO:0007669"/>
    <property type="project" value="UniProtKB-KW"/>
</dbReference>
<dbReference type="GO" id="GO:0004515">
    <property type="term" value="F:nicotinate-nucleotide adenylyltransferase activity"/>
    <property type="evidence" value="ECO:0007669"/>
    <property type="project" value="UniProtKB-UniRule"/>
</dbReference>
<dbReference type="GO" id="GO:0009435">
    <property type="term" value="P:NAD biosynthetic process"/>
    <property type="evidence" value="ECO:0007669"/>
    <property type="project" value="UniProtKB-UniRule"/>
</dbReference>
<dbReference type="CDD" id="cd02165">
    <property type="entry name" value="NMNAT"/>
    <property type="match status" value="1"/>
</dbReference>
<dbReference type="FunFam" id="3.40.50.620:FF:000255">
    <property type="entry name" value="Probable nicotinate-nucleotide adenylyltransferase"/>
    <property type="match status" value="1"/>
</dbReference>
<dbReference type="Gene3D" id="3.40.50.620">
    <property type="entry name" value="HUPs"/>
    <property type="match status" value="1"/>
</dbReference>
<dbReference type="HAMAP" id="MF_00244">
    <property type="entry name" value="NaMN_adenylyltr"/>
    <property type="match status" value="1"/>
</dbReference>
<dbReference type="InterPro" id="IPR004821">
    <property type="entry name" value="Cyt_trans-like"/>
</dbReference>
<dbReference type="InterPro" id="IPR005248">
    <property type="entry name" value="NadD/NMNAT"/>
</dbReference>
<dbReference type="InterPro" id="IPR014729">
    <property type="entry name" value="Rossmann-like_a/b/a_fold"/>
</dbReference>
<dbReference type="NCBIfam" id="TIGR00125">
    <property type="entry name" value="cyt_tran_rel"/>
    <property type="match status" value="1"/>
</dbReference>
<dbReference type="NCBIfam" id="TIGR00482">
    <property type="entry name" value="nicotinate (nicotinamide) nucleotide adenylyltransferase"/>
    <property type="match status" value="1"/>
</dbReference>
<dbReference type="NCBIfam" id="NF000840">
    <property type="entry name" value="PRK00071.1-3"/>
    <property type="match status" value="1"/>
</dbReference>
<dbReference type="PANTHER" id="PTHR39321">
    <property type="entry name" value="NICOTINATE-NUCLEOTIDE ADENYLYLTRANSFERASE-RELATED"/>
    <property type="match status" value="1"/>
</dbReference>
<dbReference type="PANTHER" id="PTHR39321:SF3">
    <property type="entry name" value="PHOSPHOPANTETHEINE ADENYLYLTRANSFERASE"/>
    <property type="match status" value="1"/>
</dbReference>
<dbReference type="Pfam" id="PF01467">
    <property type="entry name" value="CTP_transf_like"/>
    <property type="match status" value="1"/>
</dbReference>
<dbReference type="SUPFAM" id="SSF52374">
    <property type="entry name" value="Nucleotidylyl transferase"/>
    <property type="match status" value="1"/>
</dbReference>
<protein>
    <recommendedName>
        <fullName evidence="1">Probable nicotinate-nucleotide adenylyltransferase</fullName>
        <ecNumber evidence="1">2.7.7.18</ecNumber>
    </recommendedName>
    <alternativeName>
        <fullName evidence="1">Deamido-NAD(+) diphosphorylase</fullName>
    </alternativeName>
    <alternativeName>
        <fullName evidence="1">Deamido-NAD(+) pyrophosphorylase</fullName>
    </alternativeName>
    <alternativeName>
        <fullName evidence="1">Nicotinate mononucleotide adenylyltransferase</fullName>
        <shortName evidence="1">NaMN adenylyltransferase</shortName>
    </alternativeName>
</protein>
<feature type="chain" id="PRO_1000125346" description="Probable nicotinate-nucleotide adenylyltransferase">
    <location>
        <begin position="1"/>
        <end position="201"/>
    </location>
</feature>
<name>NADD_CLOBJ</name>
<keyword id="KW-0067">ATP-binding</keyword>
<keyword id="KW-0520">NAD</keyword>
<keyword id="KW-0547">Nucleotide-binding</keyword>
<keyword id="KW-0548">Nucleotidyltransferase</keyword>
<keyword id="KW-0662">Pyridine nucleotide biosynthesis</keyword>
<keyword id="KW-0808">Transferase</keyword>